<organism>
    <name type="scientific">Karelsulcia muelleri (strain GWSS)</name>
    <name type="common">Sulcia muelleri</name>
    <dbReference type="NCBI Taxonomy" id="444179"/>
    <lineage>
        <taxon>Bacteria</taxon>
        <taxon>Pseudomonadati</taxon>
        <taxon>Bacteroidota</taxon>
        <taxon>Flavobacteriia</taxon>
        <taxon>Flavobacteriales</taxon>
        <taxon>Candidatus Karelsulcia</taxon>
    </lineage>
</organism>
<evidence type="ECO:0000255" key="1">
    <source>
        <dbReference type="HAMAP-Rule" id="MF_01342"/>
    </source>
</evidence>
<evidence type="ECO:0000305" key="2"/>
<reference key="1">
    <citation type="journal article" date="2007" name="Proc. Natl. Acad. Sci. U.S.A.">
        <title>Parallel genomic evolution and metabolic interdependence in an ancient symbiosis.</title>
        <authorList>
            <person name="McCutcheon J.P."/>
            <person name="Moran N.A."/>
        </authorList>
    </citation>
    <scope>NUCLEOTIDE SEQUENCE [LARGE SCALE GENOMIC DNA]</scope>
    <source>
        <strain>GWSS</strain>
    </source>
</reference>
<dbReference type="EMBL" id="CP000770">
    <property type="protein sequence ID" value="ABS30626.1"/>
    <property type="molecule type" value="Genomic_DNA"/>
</dbReference>
<dbReference type="SMR" id="A8Z675"/>
<dbReference type="STRING" id="444179.SMGWSS_229"/>
<dbReference type="KEGG" id="smg:SMGWSS_229"/>
<dbReference type="HOGENOM" id="CLU_078858_2_1_10"/>
<dbReference type="Proteomes" id="UP000000781">
    <property type="component" value="Chromosome"/>
</dbReference>
<dbReference type="GO" id="GO:0022625">
    <property type="term" value="C:cytosolic large ribosomal subunit"/>
    <property type="evidence" value="ECO:0007669"/>
    <property type="project" value="TreeGrafter"/>
</dbReference>
<dbReference type="GO" id="GO:0019843">
    <property type="term" value="F:rRNA binding"/>
    <property type="evidence" value="ECO:0007669"/>
    <property type="project" value="UniProtKB-UniRule"/>
</dbReference>
<dbReference type="GO" id="GO:0003735">
    <property type="term" value="F:structural constituent of ribosome"/>
    <property type="evidence" value="ECO:0007669"/>
    <property type="project" value="InterPro"/>
</dbReference>
<dbReference type="GO" id="GO:0000049">
    <property type="term" value="F:tRNA binding"/>
    <property type="evidence" value="ECO:0007669"/>
    <property type="project" value="UniProtKB-KW"/>
</dbReference>
<dbReference type="GO" id="GO:0006412">
    <property type="term" value="P:translation"/>
    <property type="evidence" value="ECO:0007669"/>
    <property type="project" value="UniProtKB-UniRule"/>
</dbReference>
<dbReference type="CDD" id="cd01433">
    <property type="entry name" value="Ribosomal_L16_L10e"/>
    <property type="match status" value="1"/>
</dbReference>
<dbReference type="FunFam" id="3.90.1170.10:FF:000001">
    <property type="entry name" value="50S ribosomal protein L16"/>
    <property type="match status" value="1"/>
</dbReference>
<dbReference type="Gene3D" id="3.90.1170.10">
    <property type="entry name" value="Ribosomal protein L10e/L16"/>
    <property type="match status" value="1"/>
</dbReference>
<dbReference type="HAMAP" id="MF_01342">
    <property type="entry name" value="Ribosomal_uL16"/>
    <property type="match status" value="1"/>
</dbReference>
<dbReference type="InterPro" id="IPR047873">
    <property type="entry name" value="Ribosomal_uL16"/>
</dbReference>
<dbReference type="InterPro" id="IPR000114">
    <property type="entry name" value="Ribosomal_uL16_bact-type"/>
</dbReference>
<dbReference type="InterPro" id="IPR020798">
    <property type="entry name" value="Ribosomal_uL16_CS"/>
</dbReference>
<dbReference type="InterPro" id="IPR016180">
    <property type="entry name" value="Ribosomal_uL16_dom"/>
</dbReference>
<dbReference type="InterPro" id="IPR036920">
    <property type="entry name" value="Ribosomal_uL16_sf"/>
</dbReference>
<dbReference type="NCBIfam" id="TIGR01164">
    <property type="entry name" value="rplP_bact"/>
    <property type="match status" value="1"/>
</dbReference>
<dbReference type="PANTHER" id="PTHR12220">
    <property type="entry name" value="50S/60S RIBOSOMAL PROTEIN L16"/>
    <property type="match status" value="1"/>
</dbReference>
<dbReference type="PANTHER" id="PTHR12220:SF13">
    <property type="entry name" value="LARGE RIBOSOMAL SUBUNIT PROTEIN UL16M"/>
    <property type="match status" value="1"/>
</dbReference>
<dbReference type="Pfam" id="PF00252">
    <property type="entry name" value="Ribosomal_L16"/>
    <property type="match status" value="1"/>
</dbReference>
<dbReference type="PRINTS" id="PR00060">
    <property type="entry name" value="RIBOSOMALL16"/>
</dbReference>
<dbReference type="SUPFAM" id="SSF54686">
    <property type="entry name" value="Ribosomal protein L16p/L10e"/>
    <property type="match status" value="1"/>
</dbReference>
<dbReference type="PROSITE" id="PS00586">
    <property type="entry name" value="RIBOSOMAL_L16_1"/>
    <property type="match status" value="1"/>
</dbReference>
<dbReference type="PROSITE" id="PS00701">
    <property type="entry name" value="RIBOSOMAL_L16_2"/>
    <property type="match status" value="1"/>
</dbReference>
<sequence length="136" mass="15496">MLQPKKTKYDKRHKGRIKGNATRGTKLCFGKYGLKSLDPGWITDRQIESARVAATRYMKRQGQLWLNIFPDKPVTKKPQEVRMGKGKGVRDHWVSVVKPGRVLIEVDGVDLLMGKEALRLASQKLPVRTKFIIKNA</sequence>
<feature type="chain" id="PRO_1000086784" description="Large ribosomal subunit protein uL16">
    <location>
        <begin position="1"/>
        <end position="136"/>
    </location>
</feature>
<proteinExistence type="inferred from homology"/>
<comment type="function">
    <text evidence="1">Binds 23S rRNA and is also seen to make contacts with the A and possibly P site tRNAs.</text>
</comment>
<comment type="subunit">
    <text evidence="1">Part of the 50S ribosomal subunit.</text>
</comment>
<comment type="similarity">
    <text evidence="1">Belongs to the universal ribosomal protein uL16 family.</text>
</comment>
<gene>
    <name evidence="1" type="primary">rplP</name>
    <name type="ordered locus">SMGWSS_229</name>
</gene>
<accession>A8Z675</accession>
<name>RL16_KARMG</name>
<protein>
    <recommendedName>
        <fullName evidence="1">Large ribosomal subunit protein uL16</fullName>
    </recommendedName>
    <alternativeName>
        <fullName evidence="2">50S ribosomal protein L16</fullName>
    </alternativeName>
</protein>
<keyword id="KW-0687">Ribonucleoprotein</keyword>
<keyword id="KW-0689">Ribosomal protein</keyword>
<keyword id="KW-0694">RNA-binding</keyword>
<keyword id="KW-0699">rRNA-binding</keyword>
<keyword id="KW-0820">tRNA-binding</keyword>